<organism>
    <name type="scientific">Staphylococcus aureus (strain COL)</name>
    <dbReference type="NCBI Taxonomy" id="93062"/>
    <lineage>
        <taxon>Bacteria</taxon>
        <taxon>Bacillati</taxon>
        <taxon>Bacillota</taxon>
        <taxon>Bacilli</taxon>
        <taxon>Bacillales</taxon>
        <taxon>Staphylococcaceae</taxon>
        <taxon>Staphylococcus</taxon>
    </lineage>
</organism>
<gene>
    <name type="primary">tkt</name>
    <name type="ordered locus">SACOL1377</name>
</gene>
<dbReference type="EC" id="2.2.1.1"/>
<dbReference type="EMBL" id="CP000046">
    <property type="protein sequence ID" value="AAW36626.1"/>
    <property type="molecule type" value="Genomic_DNA"/>
</dbReference>
<dbReference type="RefSeq" id="WP_000481443.1">
    <property type="nucleotide sequence ID" value="NZ_JBGOFO010000002.1"/>
</dbReference>
<dbReference type="SMR" id="Q5HG77"/>
<dbReference type="KEGG" id="sac:SACOL1377"/>
<dbReference type="HOGENOM" id="CLU_009227_0_0_9"/>
<dbReference type="UniPathway" id="UPA00115"/>
<dbReference type="UniPathway" id="UPA00116"/>
<dbReference type="Proteomes" id="UP000000530">
    <property type="component" value="Chromosome"/>
</dbReference>
<dbReference type="GO" id="GO:0005829">
    <property type="term" value="C:cytosol"/>
    <property type="evidence" value="ECO:0007669"/>
    <property type="project" value="TreeGrafter"/>
</dbReference>
<dbReference type="GO" id="GO:0046872">
    <property type="term" value="F:metal ion binding"/>
    <property type="evidence" value="ECO:0007669"/>
    <property type="project" value="UniProtKB-KW"/>
</dbReference>
<dbReference type="GO" id="GO:0004802">
    <property type="term" value="F:transketolase activity"/>
    <property type="evidence" value="ECO:0007669"/>
    <property type="project" value="UniProtKB-EC"/>
</dbReference>
<dbReference type="GO" id="GO:0006310">
    <property type="term" value="P:DNA recombination"/>
    <property type="evidence" value="ECO:0007669"/>
    <property type="project" value="UniProtKB-KW"/>
</dbReference>
<dbReference type="GO" id="GO:0006098">
    <property type="term" value="P:pentose-phosphate shunt"/>
    <property type="evidence" value="ECO:0007669"/>
    <property type="project" value="UniProtKB-UniPathway"/>
</dbReference>
<dbReference type="GO" id="GO:0019253">
    <property type="term" value="P:reductive pentose-phosphate cycle"/>
    <property type="evidence" value="ECO:0007669"/>
    <property type="project" value="UniProtKB-UniPathway"/>
</dbReference>
<dbReference type="CDD" id="cd07033">
    <property type="entry name" value="TPP_PYR_DXS_TK_like"/>
    <property type="match status" value="1"/>
</dbReference>
<dbReference type="CDD" id="cd02012">
    <property type="entry name" value="TPP_TK"/>
    <property type="match status" value="1"/>
</dbReference>
<dbReference type="FunFam" id="3.40.50.920:FF:000003">
    <property type="entry name" value="Transketolase"/>
    <property type="match status" value="1"/>
</dbReference>
<dbReference type="FunFam" id="3.40.50.970:FF:000003">
    <property type="entry name" value="Transketolase"/>
    <property type="match status" value="1"/>
</dbReference>
<dbReference type="FunFam" id="3.40.50.970:FF:000081">
    <property type="entry name" value="Transketolase"/>
    <property type="match status" value="1"/>
</dbReference>
<dbReference type="Gene3D" id="3.40.50.920">
    <property type="match status" value="1"/>
</dbReference>
<dbReference type="Gene3D" id="3.40.50.970">
    <property type="match status" value="2"/>
</dbReference>
<dbReference type="InterPro" id="IPR029061">
    <property type="entry name" value="THDP-binding"/>
</dbReference>
<dbReference type="InterPro" id="IPR009014">
    <property type="entry name" value="Transketo_C/PFOR_II"/>
</dbReference>
<dbReference type="InterPro" id="IPR055152">
    <property type="entry name" value="Transketolase-like_C_2"/>
</dbReference>
<dbReference type="InterPro" id="IPR005475">
    <property type="entry name" value="Transketolase-like_Pyr-bd"/>
</dbReference>
<dbReference type="InterPro" id="IPR005478">
    <property type="entry name" value="Transketolase_bac-like"/>
</dbReference>
<dbReference type="InterPro" id="IPR020826">
    <property type="entry name" value="Transketolase_BS"/>
</dbReference>
<dbReference type="InterPro" id="IPR049557">
    <property type="entry name" value="Transketolase_CS"/>
</dbReference>
<dbReference type="InterPro" id="IPR033247">
    <property type="entry name" value="Transketolase_fam"/>
</dbReference>
<dbReference type="InterPro" id="IPR005474">
    <property type="entry name" value="Transketolase_N"/>
</dbReference>
<dbReference type="NCBIfam" id="TIGR00232">
    <property type="entry name" value="tktlase_bact"/>
    <property type="match status" value="1"/>
</dbReference>
<dbReference type="PANTHER" id="PTHR43522">
    <property type="entry name" value="TRANSKETOLASE"/>
    <property type="match status" value="1"/>
</dbReference>
<dbReference type="PANTHER" id="PTHR43522:SF2">
    <property type="entry name" value="TRANSKETOLASE 1-RELATED"/>
    <property type="match status" value="1"/>
</dbReference>
<dbReference type="Pfam" id="PF02779">
    <property type="entry name" value="Transket_pyr"/>
    <property type="match status" value="1"/>
</dbReference>
<dbReference type="Pfam" id="PF22613">
    <property type="entry name" value="Transketolase_C_1"/>
    <property type="match status" value="1"/>
</dbReference>
<dbReference type="Pfam" id="PF00456">
    <property type="entry name" value="Transketolase_N"/>
    <property type="match status" value="1"/>
</dbReference>
<dbReference type="SMART" id="SM00861">
    <property type="entry name" value="Transket_pyr"/>
    <property type="match status" value="1"/>
</dbReference>
<dbReference type="SUPFAM" id="SSF52518">
    <property type="entry name" value="Thiamin diphosphate-binding fold (THDP-binding)"/>
    <property type="match status" value="2"/>
</dbReference>
<dbReference type="SUPFAM" id="SSF52922">
    <property type="entry name" value="TK C-terminal domain-like"/>
    <property type="match status" value="1"/>
</dbReference>
<dbReference type="PROSITE" id="PS00801">
    <property type="entry name" value="TRANSKETOLASE_1"/>
    <property type="match status" value="1"/>
</dbReference>
<dbReference type="PROSITE" id="PS00802">
    <property type="entry name" value="TRANSKETOLASE_2"/>
    <property type="match status" value="1"/>
</dbReference>
<reference key="1">
    <citation type="journal article" date="2005" name="J. Bacteriol.">
        <title>Insights on evolution of virulence and resistance from the complete genome analysis of an early methicillin-resistant Staphylococcus aureus strain and a biofilm-producing methicillin-resistant Staphylococcus epidermidis strain.</title>
        <authorList>
            <person name="Gill S.R."/>
            <person name="Fouts D.E."/>
            <person name="Archer G.L."/>
            <person name="Mongodin E.F."/>
            <person name="DeBoy R.T."/>
            <person name="Ravel J."/>
            <person name="Paulsen I.T."/>
            <person name="Kolonay J.F."/>
            <person name="Brinkac L.M."/>
            <person name="Beanan M.J."/>
            <person name="Dodson R.J."/>
            <person name="Daugherty S.C."/>
            <person name="Madupu R."/>
            <person name="Angiuoli S.V."/>
            <person name="Durkin A.S."/>
            <person name="Haft D.H."/>
            <person name="Vamathevan J.J."/>
            <person name="Khouri H."/>
            <person name="Utterback T.R."/>
            <person name="Lee C."/>
            <person name="Dimitrov G."/>
            <person name="Jiang L."/>
            <person name="Qin H."/>
            <person name="Weidman J."/>
            <person name="Tran K."/>
            <person name="Kang K.H."/>
            <person name="Hance I.R."/>
            <person name="Nelson K.E."/>
            <person name="Fraser C.M."/>
        </authorList>
    </citation>
    <scope>NUCLEOTIDE SEQUENCE [LARGE SCALE GENOMIC DNA]</scope>
    <source>
        <strain>COL</strain>
    </source>
</reference>
<keyword id="KW-0106">Calcium</keyword>
<keyword id="KW-0233">DNA recombination</keyword>
<keyword id="KW-0460">Magnesium</keyword>
<keyword id="KW-0479">Metal-binding</keyword>
<keyword id="KW-0786">Thiamine pyrophosphate</keyword>
<keyword id="KW-0808">Transferase</keyword>
<accession>Q5HG77</accession>
<proteinExistence type="inferred from homology"/>
<evidence type="ECO:0000250" key="1"/>
<evidence type="ECO:0000305" key="2"/>
<sequence length="662" mass="72251">MFNEKDQLAVDTLRALSIDTIEKANSGHPGLPMGAAPMAYTLWTRHLNFNPQSKDYFNRDRFVLSAGHGSALLYSLLHVSGSLELEELKQFRQWGSKTPGHPEYRHTDGVEVTTGPLGQGFAMSVGLALAEDHLAGKFNKEGYNVVDHYTYVLASDGDLMEGISHEAASFAGHNKLSKLVVLYDSNDISLDGELNKAFSENTKARFEAYGWNYLLVKDGNDLEEIDKAITTAKSQEGPTIIEVKTTIGFGSPNKAGTNGVHGAPLGEVERKLTFENYGLDPEKRFNVSEEVYEIFQNTMLKRANEDESQWNSLLEKYAETYPELAEEFKLAISGKLPKNYKDELPRFELGHNGASRADSGTVIQAISKTVPSFFGGSADLAGSNKSNVNDATDYSSETPEGKNVWFGVREFAMGAAVNGMAAHGGLHPYGATFFVFSDYLKPALRLSSIMGLNATFIFTHDSIAVGEDGPTHEPIEQLAGLRAIPNMNVIRPADGNETRVAWEVALESESTPTSLVLTRQNLPVLDVPEDVVEEGVRKGAYTVYGSEETPEFLLLASGSEVSLAVEAAKDLEKQGKSVRVVSMPNWNAFEQQSEEYKESVIPSSVTKRVAIEMASPLGWHKYVGTAGKVIAIDGFGASAPGDLVVEKYGFTKENILNQVMSL</sequence>
<comment type="function">
    <text evidence="1">Catalyzes the transfer of a two-carbon ketol group from a ketose donor to an aldose acceptor, via a covalent intermediate with the cofactor thiamine pyrophosphate.</text>
</comment>
<comment type="catalytic activity">
    <reaction>
        <text>D-sedoheptulose 7-phosphate + D-glyceraldehyde 3-phosphate = aldehydo-D-ribose 5-phosphate + D-xylulose 5-phosphate</text>
        <dbReference type="Rhea" id="RHEA:10508"/>
        <dbReference type="ChEBI" id="CHEBI:57483"/>
        <dbReference type="ChEBI" id="CHEBI:57737"/>
        <dbReference type="ChEBI" id="CHEBI:58273"/>
        <dbReference type="ChEBI" id="CHEBI:59776"/>
        <dbReference type="EC" id="2.2.1.1"/>
    </reaction>
</comment>
<comment type="cofactor">
    <cofactor evidence="1">
        <name>Mg(2+)</name>
        <dbReference type="ChEBI" id="CHEBI:18420"/>
    </cofactor>
    <cofactor evidence="1">
        <name>Ca(2+)</name>
        <dbReference type="ChEBI" id="CHEBI:29108"/>
    </cofactor>
    <cofactor evidence="1">
        <name>Mn(2+)</name>
        <dbReference type="ChEBI" id="CHEBI:29035"/>
    </cofactor>
    <cofactor evidence="1">
        <name>Co(2+)</name>
        <dbReference type="ChEBI" id="CHEBI:48828"/>
    </cofactor>
    <text evidence="1">Binds 1 Mg(2+) ion per subunit. Can also utilize other divalent metal cations, such as Ca(2+), Mn(2+) and Co(2+).</text>
</comment>
<comment type="cofactor">
    <cofactor evidence="1">
        <name>thiamine diphosphate</name>
        <dbReference type="ChEBI" id="CHEBI:58937"/>
    </cofactor>
    <text evidence="1">Binds 1 thiamine pyrophosphate per subunit.</text>
</comment>
<comment type="pathway">
    <text>Carbohydrate biosynthesis; Calvin cycle.</text>
</comment>
<comment type="pathway">
    <text>Carbohydrate degradation; pentose phosphate pathway.</text>
</comment>
<comment type="subunit">
    <text evidence="1">Homodimer.</text>
</comment>
<comment type="similarity">
    <text evidence="2">Belongs to the transketolase family.</text>
</comment>
<name>TKT_STAAC</name>
<feature type="chain" id="PRO_0000191870" description="Transketolase">
    <location>
        <begin position="1"/>
        <end position="662"/>
    </location>
</feature>
<feature type="active site" description="Proton donor" evidence="1">
    <location>
        <position position="410"/>
    </location>
</feature>
<feature type="binding site" evidence="1">
    <location>
        <position position="28"/>
    </location>
    <ligand>
        <name>substrate</name>
    </ligand>
</feature>
<feature type="binding site" evidence="1">
    <location>
        <position position="68"/>
    </location>
    <ligand>
        <name>thiamine diphosphate</name>
        <dbReference type="ChEBI" id="CHEBI:58937"/>
    </ligand>
</feature>
<feature type="binding site" evidence="1">
    <location>
        <begin position="115"/>
        <end position="117"/>
    </location>
    <ligand>
        <name>thiamine diphosphate</name>
        <dbReference type="ChEBI" id="CHEBI:58937"/>
    </ligand>
</feature>
<feature type="binding site" evidence="1">
    <location>
        <position position="156"/>
    </location>
    <ligand>
        <name>Mg(2+)</name>
        <dbReference type="ChEBI" id="CHEBI:18420"/>
    </ligand>
</feature>
<feature type="binding site" evidence="1">
    <location>
        <position position="157"/>
    </location>
    <ligand>
        <name>thiamine diphosphate</name>
        <dbReference type="ChEBI" id="CHEBI:58937"/>
    </ligand>
</feature>
<feature type="binding site" evidence="1">
    <location>
        <position position="186"/>
    </location>
    <ligand>
        <name>Mg(2+)</name>
        <dbReference type="ChEBI" id="CHEBI:18420"/>
    </ligand>
</feature>
<feature type="binding site" evidence="1">
    <location>
        <position position="186"/>
    </location>
    <ligand>
        <name>thiamine diphosphate</name>
        <dbReference type="ChEBI" id="CHEBI:58937"/>
    </ligand>
</feature>
<feature type="binding site" evidence="1">
    <location>
        <position position="188"/>
    </location>
    <ligand>
        <name>Mg(2+)</name>
        <dbReference type="ChEBI" id="CHEBI:18420"/>
    </ligand>
</feature>
<feature type="binding site" evidence="1">
    <location>
        <position position="261"/>
    </location>
    <ligand>
        <name>substrate</name>
    </ligand>
</feature>
<feature type="binding site" evidence="1">
    <location>
        <position position="261"/>
    </location>
    <ligand>
        <name>thiamine diphosphate</name>
        <dbReference type="ChEBI" id="CHEBI:58937"/>
    </ligand>
</feature>
<feature type="binding site" evidence="1">
    <location>
        <position position="356"/>
    </location>
    <ligand>
        <name>substrate</name>
    </ligand>
</feature>
<feature type="binding site" evidence="1">
    <location>
        <position position="383"/>
    </location>
    <ligand>
        <name>substrate</name>
    </ligand>
</feature>
<feature type="binding site" evidence="1">
    <location>
        <position position="436"/>
    </location>
    <ligand>
        <name>thiamine diphosphate</name>
        <dbReference type="ChEBI" id="CHEBI:58937"/>
    </ligand>
</feature>
<feature type="binding site" evidence="1">
    <location>
        <position position="460"/>
    </location>
    <ligand>
        <name>substrate</name>
    </ligand>
</feature>
<feature type="binding site" evidence="1">
    <location>
        <position position="468"/>
    </location>
    <ligand>
        <name>substrate</name>
    </ligand>
</feature>
<feature type="binding site" evidence="1">
    <location>
        <position position="519"/>
    </location>
    <ligand>
        <name>substrate</name>
    </ligand>
</feature>
<feature type="site" description="Important for catalytic activity" evidence="1">
    <location>
        <position position="28"/>
    </location>
</feature>
<feature type="site" description="Important for catalytic activity" evidence="1">
    <location>
        <position position="261"/>
    </location>
</feature>
<protein>
    <recommendedName>
        <fullName>Transketolase</fullName>
        <ecNumber>2.2.1.1</ecNumber>
    </recommendedName>
</protein>